<dbReference type="EMBL" id="BC085632">
    <property type="protein sequence ID" value="AAH85632.1"/>
    <property type="molecule type" value="mRNA"/>
</dbReference>
<dbReference type="RefSeq" id="NP_001007300.1">
    <property type="nucleotide sequence ID" value="NM_001007299.1"/>
</dbReference>
<dbReference type="SMR" id="Q5U3A8"/>
<dbReference type="FunCoup" id="Q5U3A8">
    <property type="interactions" value="1057"/>
</dbReference>
<dbReference type="STRING" id="7955.ENSDARP00000135569"/>
<dbReference type="PaxDb" id="7955-ENSDARP00000028927"/>
<dbReference type="GeneID" id="492333"/>
<dbReference type="KEGG" id="dre:492333"/>
<dbReference type="AGR" id="ZFIN:ZDB-GENE-041114-8"/>
<dbReference type="CTD" id="129285"/>
<dbReference type="ZFIN" id="ZDB-GENE-041114-8">
    <property type="gene designation" value="ppp1r21"/>
</dbReference>
<dbReference type="eggNOG" id="KOG4421">
    <property type="taxonomic scope" value="Eukaryota"/>
</dbReference>
<dbReference type="InParanoid" id="Q5U3A8"/>
<dbReference type="OrthoDB" id="5566667at2759"/>
<dbReference type="PhylomeDB" id="Q5U3A8"/>
<dbReference type="PRO" id="PR:Q5U3A8"/>
<dbReference type="Proteomes" id="UP000000437">
    <property type="component" value="Chromosome 13"/>
</dbReference>
<dbReference type="GO" id="GO:0005769">
    <property type="term" value="C:early endosome"/>
    <property type="evidence" value="ECO:0000250"/>
    <property type="project" value="UniProtKB"/>
</dbReference>
<dbReference type="GO" id="GO:0003723">
    <property type="term" value="F:RNA binding"/>
    <property type="evidence" value="ECO:0007669"/>
    <property type="project" value="UniProtKB-KW"/>
</dbReference>
<dbReference type="InterPro" id="IPR040024">
    <property type="entry name" value="PPP1R21"/>
</dbReference>
<dbReference type="InterPro" id="IPR049372">
    <property type="entry name" value="PPP1R21_C"/>
</dbReference>
<dbReference type="InterPro" id="IPR019343">
    <property type="entry name" value="PPP1R21_N"/>
</dbReference>
<dbReference type="InterPro" id="IPR019348">
    <property type="entry name" value="PPP1R21_six_helix"/>
</dbReference>
<dbReference type="PANTHER" id="PTHR21448:SF0">
    <property type="entry name" value="PROTEIN PHOSPHATASE 1 REGULATORY SUBUNIT 21"/>
    <property type="match status" value="1"/>
</dbReference>
<dbReference type="PANTHER" id="PTHR21448">
    <property type="entry name" value="SMOOTH MUSCLE MYOSIN HEAVY CHAIN-RELATED"/>
    <property type="match status" value="1"/>
</dbReference>
<dbReference type="Pfam" id="PF10205">
    <property type="entry name" value="KLRAQ"/>
    <property type="match status" value="1"/>
</dbReference>
<dbReference type="Pfam" id="PF21636">
    <property type="entry name" value="PPP1R21_C"/>
    <property type="match status" value="1"/>
</dbReference>
<dbReference type="Pfam" id="PF10212">
    <property type="entry name" value="PPP1R21_helical"/>
    <property type="match status" value="2"/>
</dbReference>
<dbReference type="SMART" id="SM01254">
    <property type="entry name" value="KLRAQ"/>
    <property type="match status" value="1"/>
</dbReference>
<comment type="function">
    <text evidence="1">Component of the FERRY complex (Five-subunit Endosomal Rab5 and RNA/ribosome intermediary). The FERRY complex directly interacts with mRNAs and RAB5A, and functions as a RAB5A effector involved in the localization and the distribution of specific mRNAs most likely by mediating their endosomal transport. The complex recruits mRNAs and ribosomes to early endosomes through direct mRNA-interaction (By similarity). Putative regulator of protein phosphatase 1 (PP1) activity. May play a role in the endosomal sorting process or in endosome maturation pathway (By similarity).</text>
</comment>
<comment type="subunit">
    <text evidence="1">Component of the FERRY complex.</text>
</comment>
<comment type="subcellular location">
    <subcellularLocation>
        <location evidence="1">Early endosome</location>
    </subcellularLocation>
</comment>
<comment type="domain">
    <text evidence="1">Coiled-coil domains of PPP1R21 are essential for RNA binding.</text>
</comment>
<accession>Q5U3A8</accession>
<reference key="1">
    <citation type="submission" date="2004-11" db="EMBL/GenBank/DDBJ databases">
        <authorList>
            <consortium name="NIH - Zebrafish Gene Collection (ZGC) project"/>
        </authorList>
    </citation>
    <scope>NUCLEOTIDE SEQUENCE [LARGE SCALE MRNA]</scope>
</reference>
<gene>
    <name type="primary">ppp1r21</name>
    <name type="synonym">ccdc128</name>
    <name type="synonym">klraq1</name>
    <name type="ORF">zgc:92087</name>
</gene>
<keyword id="KW-0175">Coiled coil</keyword>
<keyword id="KW-0967">Endosome</keyword>
<keyword id="KW-1185">Reference proteome</keyword>
<keyword id="KW-0694">RNA-binding</keyword>
<proteinExistence type="evidence at transcript level"/>
<name>PPR21_DANRE</name>
<protein>
    <recommendedName>
        <fullName>Protein phosphatase 1 regulatory subunit 21</fullName>
    </recommendedName>
    <alternativeName>
        <fullName>Coiled-coil domain-containing protein 128</fullName>
    </alternativeName>
    <alternativeName>
        <fullName evidence="1">Ferry endosomal RAB5 effector complex subunit 2</fullName>
        <shortName evidence="1">Fy-2</shortName>
    </alternativeName>
    <alternativeName>
        <fullName>KLRAQ motif-containing protein 1</fullName>
    </alternativeName>
</protein>
<evidence type="ECO:0000250" key="1">
    <source>
        <dbReference type="UniProtKB" id="Q6ZMI0"/>
    </source>
</evidence>
<evidence type="ECO:0000255" key="2"/>
<organism>
    <name type="scientific">Danio rerio</name>
    <name type="common">Zebrafish</name>
    <name type="synonym">Brachydanio rerio</name>
    <dbReference type="NCBI Taxonomy" id="7955"/>
    <lineage>
        <taxon>Eukaryota</taxon>
        <taxon>Metazoa</taxon>
        <taxon>Chordata</taxon>
        <taxon>Craniata</taxon>
        <taxon>Vertebrata</taxon>
        <taxon>Euteleostomi</taxon>
        <taxon>Actinopterygii</taxon>
        <taxon>Neopterygii</taxon>
        <taxon>Teleostei</taxon>
        <taxon>Ostariophysi</taxon>
        <taxon>Cypriniformes</taxon>
        <taxon>Danionidae</taxon>
        <taxon>Danioninae</taxon>
        <taxon>Danio</taxon>
    </lineage>
</organism>
<feature type="chain" id="PRO_0000286101" description="Protein phosphatase 1 regulatory subunit 21">
    <location>
        <begin position="1"/>
        <end position="665"/>
    </location>
</feature>
<feature type="coiled-coil region" evidence="2">
    <location>
        <begin position="1"/>
        <end position="84"/>
    </location>
</feature>
<feature type="coiled-coil region" evidence="2">
    <location>
        <begin position="125"/>
        <end position="206"/>
    </location>
</feature>
<feature type="coiled-coil region" evidence="2">
    <location>
        <begin position="426"/>
        <end position="477"/>
    </location>
</feature>
<feature type="coiled-coil region" evidence="2">
    <location>
        <begin position="586"/>
        <end position="627"/>
    </location>
</feature>
<sequence length="665" mass="75153">MTDLQSKYSKLAQEYSKLRAQNQVLKKAVVDEQSSCNSLKDELKQKEQSLRRVEQEMDSLSFRNQQLMKRVELLQEELLLSESKSKKSRSKGDSPSQVSLQAQSVFDEDLHKKIQENERLHIQWLEAQEQHQQQEAQLSSRLQQLQEEAQEHQAQLEELSCRHAHTIHTLQEDKATLEVKLQTLEREARDCRVRTEECQQQLRKYQSEVSSQLKHSSSVIQEKVPFNDTQLSDYNSLNVPAHNRRHQLRAREVAAQALVFLQNLVSALLNFHSYSEQRVQIYPRDSSIETISAVNQKFSQYLHENASYLRQLEEDLLQLHQSITEDLPAATQKFCTTNECLLSSLASLTSSSGKMATFFSNSLDFLTSCAGYSPSGALLKPLQADSVMQSKRRAAAYISSVRQARAESVPYGEALANRHILTSSTESREGLMQQVLQSQQKISRLEQEKEHWLLEAQLAQVRLQKESARIAQLEAQVCVSAPQSQLCASAAESPVCVSAAESQVCVSAAETPSEPALADAPEPLQDTSVVGVLSIRSCSESSADQDSREQLIKTHYMSRVSELTTQLQICDSKAVHFHAECRAVAKRLAMAERSRDTLGEELKLANQNITRLQDELSTTKRSYEDQLSMMSDHLCSMNETLSQQRETIDTLKLSAKGNAKKNKSR</sequence>